<organism>
    <name type="scientific">Cornu aspersum</name>
    <name type="common">Brown garden snail</name>
    <name type="synonym">Helix aspersa</name>
    <dbReference type="NCBI Taxonomy" id="6535"/>
    <lineage>
        <taxon>Eukaryota</taxon>
        <taxon>Metazoa</taxon>
        <taxon>Spiralia</taxon>
        <taxon>Lophotrochozoa</taxon>
        <taxon>Mollusca</taxon>
        <taxon>Gastropoda</taxon>
        <taxon>Heterobranchia</taxon>
        <taxon>Euthyneura</taxon>
        <taxon>Panpulmonata</taxon>
        <taxon>Eupulmonata</taxon>
        <taxon>Stylommatophora</taxon>
        <taxon>Helicina</taxon>
        <taxon>Helicoidea</taxon>
        <taxon>Helicidae</taxon>
        <taxon>Cornu</taxon>
        <taxon>Cornu</taxon>
    </lineage>
</organism>
<feature type="peptide" id="PRO_0000044131" description="Dart gland peptide">
    <location>
        <begin position="1"/>
        <end position="21"/>
    </location>
</feature>
<feature type="region of interest" description="Disordered" evidence="1">
    <location>
        <begin position="1"/>
        <end position="21"/>
    </location>
</feature>
<feature type="glycosylation site" description="N-linked (GlcNAc...) asparagine" evidence="2">
    <location>
        <position position="3"/>
    </location>
</feature>
<comment type="subcellular location">
    <subcellularLocation>
        <location>Secreted</location>
    </subcellularLocation>
</comment>
<name>DGP_CORAP</name>
<keyword id="KW-0903">Direct protein sequencing</keyword>
<keyword id="KW-0325">Glycoprotein</keyword>
<keyword id="KW-0964">Secreted</keyword>
<protein>
    <recommendedName>
        <fullName>Dart gland peptide</fullName>
    </recommendedName>
</protein>
<reference key="1">
    <citation type="submission" date="2002-05" db="PIR data bank">
        <authorList>
            <person name="Nagle G.T."/>
        </authorList>
    </citation>
    <scope>PROTEIN SEQUENCE</scope>
    <scope>GLYCOSYLATION AT ASN-3</scope>
    <source>
        <tissue>Dart gland</tissue>
    </source>
</reference>
<evidence type="ECO:0000256" key="1">
    <source>
        <dbReference type="SAM" id="MobiDB-lite"/>
    </source>
</evidence>
<evidence type="ECO:0000269" key="2">
    <source ref="1"/>
</evidence>
<sequence>SINNTGGSGNRRLDKNGFAGQ</sequence>
<accession>Q7M458</accession>
<proteinExistence type="evidence at protein level"/>
<dbReference type="PIR" id="A59429">
    <property type="entry name" value="A59429"/>
</dbReference>
<dbReference type="GO" id="GO:0005576">
    <property type="term" value="C:extracellular region"/>
    <property type="evidence" value="ECO:0007669"/>
    <property type="project" value="UniProtKB-SubCell"/>
</dbReference>